<gene>
    <name type="primary">ero-1</name>
    <name type="ORF">Y105E8B.8</name>
</gene>
<name>ERO1_CAEEL</name>
<evidence type="ECO:0000250" key="1"/>
<evidence type="ECO:0000250" key="2">
    <source>
        <dbReference type="UniProtKB" id="Q96HE7"/>
    </source>
</evidence>
<evidence type="ECO:0000255" key="3"/>
<evidence type="ECO:0000256" key="4">
    <source>
        <dbReference type="SAM" id="MobiDB-lite"/>
    </source>
</evidence>
<evidence type="ECO:0000305" key="5"/>
<organism>
    <name type="scientific">Caenorhabditis elegans</name>
    <dbReference type="NCBI Taxonomy" id="6239"/>
    <lineage>
        <taxon>Eukaryota</taxon>
        <taxon>Metazoa</taxon>
        <taxon>Ecdysozoa</taxon>
        <taxon>Nematoda</taxon>
        <taxon>Chromadorea</taxon>
        <taxon>Rhabditida</taxon>
        <taxon>Rhabditina</taxon>
        <taxon>Rhabditomorpha</taxon>
        <taxon>Rhabditoidea</taxon>
        <taxon>Rhabditidae</taxon>
        <taxon>Peloderinae</taxon>
        <taxon>Caenorhabditis</taxon>
    </lineage>
</organism>
<reference key="1">
    <citation type="journal article" date="1998" name="Science">
        <title>Genome sequence of the nematode C. elegans: a platform for investigating biology.</title>
        <authorList>
            <consortium name="The C. elegans sequencing consortium"/>
        </authorList>
    </citation>
    <scope>NUCLEOTIDE SEQUENCE [LARGE SCALE GENOMIC DNA]</scope>
    <scope>ALTERNATIVE SPLICING</scope>
    <source>
        <strain>Bristol N2</strain>
    </source>
</reference>
<feature type="signal peptide" evidence="3">
    <location>
        <begin position="1"/>
        <end position="20"/>
    </location>
</feature>
<feature type="chain" id="PRO_0000008420" description="Endoplasmic reticulum oxidoreductin-1">
    <location>
        <begin position="21"/>
        <end position="478"/>
    </location>
</feature>
<feature type="region of interest" description="Disordered" evidence="4">
    <location>
        <begin position="117"/>
        <end position="143"/>
    </location>
</feature>
<feature type="region of interest" description="Disordered" evidence="4">
    <location>
        <begin position="459"/>
        <end position="478"/>
    </location>
</feature>
<feature type="binding site" evidence="2">
    <location>
        <position position="188"/>
    </location>
    <ligand>
        <name>FAD</name>
        <dbReference type="ChEBI" id="CHEBI:57692"/>
    </ligand>
</feature>
<feature type="binding site" evidence="2">
    <location>
        <position position="190"/>
    </location>
    <ligand>
        <name>FAD</name>
        <dbReference type="ChEBI" id="CHEBI:57692"/>
    </ligand>
</feature>
<feature type="binding site" evidence="2">
    <location>
        <position position="201"/>
    </location>
    <ligand>
        <name>FAD</name>
        <dbReference type="ChEBI" id="CHEBI:57692"/>
    </ligand>
</feature>
<feature type="binding site" evidence="2">
    <location>
        <position position="241"/>
    </location>
    <ligand>
        <name>FAD</name>
        <dbReference type="ChEBI" id="CHEBI:57692"/>
    </ligand>
</feature>
<feature type="binding site" evidence="2">
    <location>
        <position position="244"/>
    </location>
    <ligand>
        <name>FAD</name>
        <dbReference type="ChEBI" id="CHEBI:57692"/>
    </ligand>
</feature>
<feature type="binding site" evidence="2">
    <location>
        <position position="283"/>
    </location>
    <ligand>
        <name>FAD</name>
        <dbReference type="ChEBI" id="CHEBI:57692"/>
    </ligand>
</feature>
<feature type="binding site" evidence="2">
    <location>
        <position position="295"/>
    </location>
    <ligand>
        <name>FAD</name>
        <dbReference type="ChEBI" id="CHEBI:57692"/>
    </ligand>
</feature>
<feature type="glycosylation site" description="N-linked (GlcNAc...) asparagine" evidence="3">
    <location>
        <position position="377"/>
    </location>
</feature>
<feature type="disulfide bond" evidence="2">
    <location>
        <begin position="28"/>
        <end position="41"/>
    </location>
</feature>
<feature type="disulfide bond" evidence="2">
    <location>
        <begin position="30"/>
        <end position="39"/>
    </location>
</feature>
<feature type="disulfide bond" evidence="2">
    <location>
        <begin position="79"/>
        <end position="384"/>
    </location>
</feature>
<feature type="disulfide bond" description="Redox-active" evidence="2">
    <location>
        <begin position="88"/>
        <end position="93"/>
    </location>
</feature>
<feature type="disulfide bond" evidence="2">
    <location>
        <begin position="209"/>
        <end position="230"/>
    </location>
</feature>
<feature type="disulfide bond" description="Redox-active" evidence="2">
    <location>
        <begin position="387"/>
        <end position="390"/>
    </location>
</feature>
<feature type="splice variant" id="VSP_036006" description="In isoform b." evidence="5">
    <location>
        <begin position="1"/>
        <end position="139"/>
    </location>
</feature>
<protein>
    <recommendedName>
        <fullName>Endoplasmic reticulum oxidoreductin-1</fullName>
        <ecNumber>1.8.4.-</ecNumber>
    </recommendedName>
</protein>
<comment type="function">
    <text evidence="1">Oxidoreductase involved in disulfide bond formation in the endoplasmic reticulum. Efficiently reoxidizes pdi-1, the enzyme catalyzing protein disulfide formation, in order to allow pdi-1 to sustain additional rounds of disulfide formation. Following pdi reoxidation, passes its electrons to molecular oxygen via FAD, leading to the production of reactive oxygen species (ROS) in the cell (By similarity).</text>
</comment>
<comment type="cofactor">
    <cofactor evidence="2">
        <name>FAD</name>
        <dbReference type="ChEBI" id="CHEBI:57692"/>
    </cofactor>
</comment>
<comment type="subunit">
    <text evidence="1">May function both as a monomer and a homodimer.</text>
</comment>
<comment type="subcellular location">
    <subcellularLocation>
        <location evidence="1">Endoplasmic reticulum membrane</location>
        <topology evidence="1">Peripheral membrane protein</topology>
        <orientation evidence="1">Lumenal side</orientation>
    </subcellularLocation>
</comment>
<comment type="alternative products">
    <event type="alternative splicing"/>
    <isoform>
        <id>Q7YTU4-1</id>
        <name>a</name>
        <sequence type="displayed"/>
    </isoform>
    <isoform>
        <id>Q7YTU4-2</id>
        <name>b</name>
        <sequence type="described" ref="VSP_036006"/>
    </isoform>
</comment>
<comment type="similarity">
    <text evidence="5">Belongs to the EROs family.</text>
</comment>
<proteinExistence type="inferred from homology"/>
<accession>Q7YTU4</accession>
<accession>Q95Q33</accession>
<sequence>MREPLLQLIVLSLIIIVVNTQFESGRLCFCKGFEAVEPCDCSKPQTIDKLNNHRIYEKVQKLLKKDFFRFYKVNMDKTCPFWADDRQCGTNQCGIAFCDDEVPAGLRRRNAVNMEAAAVKEEEDDDAEKCADAGNNIDPMDRTLHDDEKRQLDAMDHHDDGLEDKFCEIEDDESDGMHYVDLSKNPERYTGYAGKSPQRVWKSIYEENCFKPDPKFDKNFLTNPSNFGMCLEKRVFYRLISGLHSAITISIAAYNYKPPPPSLGQFGSQMGTWFRNTEMFAGRFGTKWSWEGPQRLRNVYFIYLLELRALLKAAPYLQNELFYTGNDVEDAETRKAVEDLLEEIRAYPNHFDESEMFTGVESHARALREEFRSHFVNISRIMDCVECDKCRLWGKVQTHGMGTALKILFSDLPHSHYKQDSSKFQLTRNEVVALLQSFGRYSSSILEVDNFREDMYPGESVMNTAADGPPRKSNKIDL</sequence>
<dbReference type="EC" id="1.8.4.-"/>
<dbReference type="EMBL" id="AL132877">
    <property type="protein sequence ID" value="CAC70110.4"/>
    <property type="molecule type" value="Genomic_DNA"/>
</dbReference>
<dbReference type="EMBL" id="AL132877">
    <property type="protein sequence ID" value="CAD92388.2"/>
    <property type="molecule type" value="Genomic_DNA"/>
</dbReference>
<dbReference type="RefSeq" id="NP_001021704.1">
    <property type="nucleotide sequence ID" value="NM_001026533.5"/>
</dbReference>
<dbReference type="RefSeq" id="NP_001021705.2">
    <property type="nucleotide sequence ID" value="NM_001026534.3"/>
</dbReference>
<dbReference type="RefSeq" id="NP_001364626.1">
    <molecule id="Q7YTU4-1"/>
    <property type="nucleotide sequence ID" value="NM_001377681.1"/>
</dbReference>
<dbReference type="RefSeq" id="NP_001364632.1">
    <molecule id="Q7YTU4-2"/>
    <property type="nucleotide sequence ID" value="NM_001377682.2"/>
</dbReference>
<dbReference type="SMR" id="Q7YTU4"/>
<dbReference type="BioGRID" id="38710">
    <property type="interactions" value="2"/>
</dbReference>
<dbReference type="DIP" id="DIP-26357N"/>
<dbReference type="FunCoup" id="Q7YTU4">
    <property type="interactions" value="3001"/>
</dbReference>
<dbReference type="IntAct" id="Q7YTU4">
    <property type="interactions" value="1"/>
</dbReference>
<dbReference type="STRING" id="6239.Y105E8B.8c.2"/>
<dbReference type="GlyCosmos" id="Q7YTU4">
    <property type="glycosylation" value="1 site, No reported glycans"/>
</dbReference>
<dbReference type="PaxDb" id="6239-Y105E8B.8c"/>
<dbReference type="PeptideAtlas" id="Q7YTU4"/>
<dbReference type="EnsemblMetazoa" id="Y105E8B.8a.1">
    <molecule id="Q7YTU4-1"/>
    <property type="protein sequence ID" value="Y105E8B.8a.1"/>
    <property type="gene ID" value="WBGene00001334"/>
</dbReference>
<dbReference type="EnsemblMetazoa" id="Y105E8B.8b.1">
    <molecule id="Q7YTU4-2"/>
    <property type="protein sequence ID" value="Y105E8B.8b.1"/>
    <property type="gene ID" value="WBGene00001334"/>
</dbReference>
<dbReference type="GeneID" id="173325"/>
<dbReference type="UCSC" id="Y105E8B.8b">
    <molecule id="Q7YTU4-1"/>
    <property type="organism name" value="c. elegans"/>
</dbReference>
<dbReference type="AGR" id="WB:WBGene00001334"/>
<dbReference type="WormBase" id="Y105E8B.8a">
    <molecule id="Q7YTU4-1"/>
    <property type="protein sequence ID" value="CE33847"/>
    <property type="gene ID" value="WBGene00001334"/>
    <property type="gene designation" value="ero-1"/>
</dbReference>
<dbReference type="WormBase" id="Y105E8B.8b">
    <molecule id="Q7YTU4-2"/>
    <property type="protein sequence ID" value="CE42762"/>
    <property type="gene ID" value="WBGene00001334"/>
    <property type="gene designation" value="ero-1"/>
</dbReference>
<dbReference type="eggNOG" id="KOG2608">
    <property type="taxonomic scope" value="Eukaryota"/>
</dbReference>
<dbReference type="HOGENOM" id="CLU_023061_2_2_1"/>
<dbReference type="InParanoid" id="Q7YTU4"/>
<dbReference type="PhylomeDB" id="Q7YTU4"/>
<dbReference type="Reactome" id="R-CEL-264876">
    <property type="pathway name" value="Insulin processing"/>
</dbReference>
<dbReference type="PRO" id="PR:Q7YTU4"/>
<dbReference type="Proteomes" id="UP000001940">
    <property type="component" value="Chromosome I"/>
</dbReference>
<dbReference type="Bgee" id="WBGene00001334">
    <property type="expression patterns" value="Expressed in adult organism and 4 other cell types or tissues"/>
</dbReference>
<dbReference type="ExpressionAtlas" id="Q7YTU4">
    <property type="expression patterns" value="baseline and differential"/>
</dbReference>
<dbReference type="GO" id="GO:0005789">
    <property type="term" value="C:endoplasmic reticulum membrane"/>
    <property type="evidence" value="ECO:0000318"/>
    <property type="project" value="GO_Central"/>
</dbReference>
<dbReference type="GO" id="GO:0071949">
    <property type="term" value="F:FAD binding"/>
    <property type="evidence" value="ECO:0007669"/>
    <property type="project" value="InterPro"/>
</dbReference>
<dbReference type="GO" id="GO:0015035">
    <property type="term" value="F:protein-disulfide reductase activity"/>
    <property type="evidence" value="ECO:0000318"/>
    <property type="project" value="GO_Central"/>
</dbReference>
<dbReference type="GO" id="GO:0016972">
    <property type="term" value="F:thiol oxidase activity"/>
    <property type="evidence" value="ECO:0007669"/>
    <property type="project" value="InterPro"/>
</dbReference>
<dbReference type="GO" id="GO:0036498">
    <property type="term" value="P:IRE1-mediated unfolded protein response"/>
    <property type="evidence" value="ECO:0000270"/>
    <property type="project" value="WormBase"/>
</dbReference>
<dbReference type="GO" id="GO:0034975">
    <property type="term" value="P:protein folding in endoplasmic reticulum"/>
    <property type="evidence" value="ECO:0000315"/>
    <property type="project" value="WormBase"/>
</dbReference>
<dbReference type="GO" id="GO:0034976">
    <property type="term" value="P:response to endoplasmic reticulum stress"/>
    <property type="evidence" value="ECO:0000315"/>
    <property type="project" value="ParkinsonsUK-UCL"/>
</dbReference>
<dbReference type="InterPro" id="IPR007266">
    <property type="entry name" value="Ero1"/>
</dbReference>
<dbReference type="InterPro" id="IPR037192">
    <property type="entry name" value="ERO1-like_sf"/>
</dbReference>
<dbReference type="PANTHER" id="PTHR12613:SF0">
    <property type="entry name" value="ERO1-LIKE PROTEIN"/>
    <property type="match status" value="1"/>
</dbReference>
<dbReference type="PANTHER" id="PTHR12613">
    <property type="entry name" value="ERO1-RELATED"/>
    <property type="match status" value="1"/>
</dbReference>
<dbReference type="Pfam" id="PF04137">
    <property type="entry name" value="ERO1"/>
    <property type="match status" value="1"/>
</dbReference>
<dbReference type="PIRSF" id="PIRSF017205">
    <property type="entry name" value="ERO1"/>
    <property type="match status" value="1"/>
</dbReference>
<dbReference type="SUPFAM" id="SSF110019">
    <property type="entry name" value="ERO1-like"/>
    <property type="match status" value="1"/>
</dbReference>
<keyword id="KW-0025">Alternative splicing</keyword>
<keyword id="KW-1015">Disulfide bond</keyword>
<keyword id="KW-0249">Electron transport</keyword>
<keyword id="KW-0256">Endoplasmic reticulum</keyword>
<keyword id="KW-0274">FAD</keyword>
<keyword id="KW-0285">Flavoprotein</keyword>
<keyword id="KW-0325">Glycoprotein</keyword>
<keyword id="KW-0472">Membrane</keyword>
<keyword id="KW-0560">Oxidoreductase</keyword>
<keyword id="KW-0676">Redox-active center</keyword>
<keyword id="KW-1185">Reference proteome</keyword>
<keyword id="KW-0732">Signal</keyword>
<keyword id="KW-0813">Transport</keyword>